<gene>
    <name evidence="1" type="primary">adk</name>
    <name type="ordered locus">BB2005</name>
</gene>
<dbReference type="EC" id="2.7.4.3" evidence="1"/>
<dbReference type="EMBL" id="BX640443">
    <property type="protein sequence ID" value="CAE32502.1"/>
    <property type="molecule type" value="Genomic_DNA"/>
</dbReference>
<dbReference type="RefSeq" id="WP_003812899.1">
    <property type="nucleotide sequence ID" value="NC_002927.3"/>
</dbReference>
<dbReference type="SMR" id="Q7WKU8"/>
<dbReference type="GeneID" id="56478169"/>
<dbReference type="KEGG" id="bbr:BB2005"/>
<dbReference type="eggNOG" id="COG0563">
    <property type="taxonomic scope" value="Bacteria"/>
</dbReference>
<dbReference type="HOGENOM" id="CLU_032354_1_2_4"/>
<dbReference type="UniPathway" id="UPA00588">
    <property type="reaction ID" value="UER00649"/>
</dbReference>
<dbReference type="Proteomes" id="UP000001027">
    <property type="component" value="Chromosome"/>
</dbReference>
<dbReference type="GO" id="GO:0005737">
    <property type="term" value="C:cytoplasm"/>
    <property type="evidence" value="ECO:0007669"/>
    <property type="project" value="UniProtKB-SubCell"/>
</dbReference>
<dbReference type="GO" id="GO:0004017">
    <property type="term" value="F:adenylate kinase activity"/>
    <property type="evidence" value="ECO:0007669"/>
    <property type="project" value="UniProtKB-UniRule"/>
</dbReference>
<dbReference type="GO" id="GO:0005524">
    <property type="term" value="F:ATP binding"/>
    <property type="evidence" value="ECO:0007669"/>
    <property type="project" value="UniProtKB-UniRule"/>
</dbReference>
<dbReference type="GO" id="GO:0044209">
    <property type="term" value="P:AMP salvage"/>
    <property type="evidence" value="ECO:0007669"/>
    <property type="project" value="UniProtKB-UniRule"/>
</dbReference>
<dbReference type="CDD" id="cd01428">
    <property type="entry name" value="ADK"/>
    <property type="match status" value="1"/>
</dbReference>
<dbReference type="FunFam" id="3.40.50.300:FF:000106">
    <property type="entry name" value="Adenylate kinase mitochondrial"/>
    <property type="match status" value="1"/>
</dbReference>
<dbReference type="Gene3D" id="3.40.50.300">
    <property type="entry name" value="P-loop containing nucleotide triphosphate hydrolases"/>
    <property type="match status" value="1"/>
</dbReference>
<dbReference type="HAMAP" id="MF_00235">
    <property type="entry name" value="Adenylate_kinase_Adk"/>
    <property type="match status" value="1"/>
</dbReference>
<dbReference type="InterPro" id="IPR006259">
    <property type="entry name" value="Adenyl_kin_sub"/>
</dbReference>
<dbReference type="InterPro" id="IPR000850">
    <property type="entry name" value="Adenylat/UMP-CMP_kin"/>
</dbReference>
<dbReference type="InterPro" id="IPR033690">
    <property type="entry name" value="Adenylat_kinase_CS"/>
</dbReference>
<dbReference type="InterPro" id="IPR007862">
    <property type="entry name" value="Adenylate_kinase_lid-dom"/>
</dbReference>
<dbReference type="InterPro" id="IPR027417">
    <property type="entry name" value="P-loop_NTPase"/>
</dbReference>
<dbReference type="NCBIfam" id="TIGR01351">
    <property type="entry name" value="adk"/>
    <property type="match status" value="1"/>
</dbReference>
<dbReference type="NCBIfam" id="NF001379">
    <property type="entry name" value="PRK00279.1-1"/>
    <property type="match status" value="1"/>
</dbReference>
<dbReference type="NCBIfam" id="NF001380">
    <property type="entry name" value="PRK00279.1-2"/>
    <property type="match status" value="1"/>
</dbReference>
<dbReference type="NCBIfam" id="NF001381">
    <property type="entry name" value="PRK00279.1-3"/>
    <property type="match status" value="1"/>
</dbReference>
<dbReference type="NCBIfam" id="NF011100">
    <property type="entry name" value="PRK14527.1"/>
    <property type="match status" value="1"/>
</dbReference>
<dbReference type="PANTHER" id="PTHR23359">
    <property type="entry name" value="NUCLEOTIDE KINASE"/>
    <property type="match status" value="1"/>
</dbReference>
<dbReference type="Pfam" id="PF00406">
    <property type="entry name" value="ADK"/>
    <property type="match status" value="1"/>
</dbReference>
<dbReference type="Pfam" id="PF05191">
    <property type="entry name" value="ADK_lid"/>
    <property type="match status" value="1"/>
</dbReference>
<dbReference type="PRINTS" id="PR00094">
    <property type="entry name" value="ADENYLTKNASE"/>
</dbReference>
<dbReference type="SUPFAM" id="SSF52540">
    <property type="entry name" value="P-loop containing nucleoside triphosphate hydrolases"/>
    <property type="match status" value="1"/>
</dbReference>
<dbReference type="PROSITE" id="PS00113">
    <property type="entry name" value="ADENYLATE_KINASE"/>
    <property type="match status" value="1"/>
</dbReference>
<comment type="function">
    <text evidence="1">Catalyzes the reversible transfer of the terminal phosphate group between ATP and AMP. Plays an important role in cellular energy homeostasis and in adenine nucleotide metabolism.</text>
</comment>
<comment type="catalytic activity">
    <reaction evidence="1">
        <text>AMP + ATP = 2 ADP</text>
        <dbReference type="Rhea" id="RHEA:12973"/>
        <dbReference type="ChEBI" id="CHEBI:30616"/>
        <dbReference type="ChEBI" id="CHEBI:456215"/>
        <dbReference type="ChEBI" id="CHEBI:456216"/>
        <dbReference type="EC" id="2.7.4.3"/>
    </reaction>
</comment>
<comment type="pathway">
    <text evidence="1">Purine metabolism; AMP biosynthesis via salvage pathway; AMP from ADP: step 1/1.</text>
</comment>
<comment type="subunit">
    <text evidence="1">Monomer.</text>
</comment>
<comment type="subcellular location">
    <subcellularLocation>
        <location evidence="1">Cytoplasm</location>
    </subcellularLocation>
</comment>
<comment type="domain">
    <text evidence="1">Consists of three domains, a large central CORE domain and two small peripheral domains, NMPbind and LID, which undergo movements during catalysis. The LID domain closes over the site of phosphoryl transfer upon ATP binding. Assembling and dissambling the active center during each catalytic cycle provides an effective means to prevent ATP hydrolysis.</text>
</comment>
<comment type="similarity">
    <text evidence="1">Belongs to the adenylate kinase family.</text>
</comment>
<protein>
    <recommendedName>
        <fullName evidence="1">Adenylate kinase</fullName>
        <shortName evidence="1">AK</shortName>
        <ecNumber evidence="1">2.7.4.3</ecNumber>
    </recommendedName>
    <alternativeName>
        <fullName evidence="1">ATP-AMP transphosphorylase</fullName>
    </alternativeName>
    <alternativeName>
        <fullName evidence="1">ATP:AMP phosphotransferase</fullName>
    </alternativeName>
    <alternativeName>
        <fullName evidence="1">Adenylate monophosphate kinase</fullName>
    </alternativeName>
</protein>
<keyword id="KW-0067">ATP-binding</keyword>
<keyword id="KW-0963">Cytoplasm</keyword>
<keyword id="KW-0418">Kinase</keyword>
<keyword id="KW-0545">Nucleotide biosynthesis</keyword>
<keyword id="KW-0547">Nucleotide-binding</keyword>
<keyword id="KW-0808">Transferase</keyword>
<accession>Q7WKU8</accession>
<feature type="chain" id="PRO_0000158736" description="Adenylate kinase">
    <location>
        <begin position="1"/>
        <end position="218"/>
    </location>
</feature>
<feature type="region of interest" description="NMP" evidence="1">
    <location>
        <begin position="30"/>
        <end position="59"/>
    </location>
</feature>
<feature type="region of interest" description="LID" evidence="1">
    <location>
        <begin position="122"/>
        <end position="159"/>
    </location>
</feature>
<feature type="binding site" evidence="1">
    <location>
        <begin position="10"/>
        <end position="15"/>
    </location>
    <ligand>
        <name>ATP</name>
        <dbReference type="ChEBI" id="CHEBI:30616"/>
    </ligand>
</feature>
<feature type="binding site" evidence="1">
    <location>
        <position position="31"/>
    </location>
    <ligand>
        <name>AMP</name>
        <dbReference type="ChEBI" id="CHEBI:456215"/>
    </ligand>
</feature>
<feature type="binding site" evidence="1">
    <location>
        <position position="36"/>
    </location>
    <ligand>
        <name>AMP</name>
        <dbReference type="ChEBI" id="CHEBI:456215"/>
    </ligand>
</feature>
<feature type="binding site" evidence="1">
    <location>
        <begin position="57"/>
        <end position="59"/>
    </location>
    <ligand>
        <name>AMP</name>
        <dbReference type="ChEBI" id="CHEBI:456215"/>
    </ligand>
</feature>
<feature type="binding site" evidence="1">
    <location>
        <begin position="85"/>
        <end position="88"/>
    </location>
    <ligand>
        <name>AMP</name>
        <dbReference type="ChEBI" id="CHEBI:456215"/>
    </ligand>
</feature>
<feature type="binding site" evidence="1">
    <location>
        <position position="92"/>
    </location>
    <ligand>
        <name>AMP</name>
        <dbReference type="ChEBI" id="CHEBI:456215"/>
    </ligand>
</feature>
<feature type="binding site" evidence="1">
    <location>
        <position position="123"/>
    </location>
    <ligand>
        <name>ATP</name>
        <dbReference type="ChEBI" id="CHEBI:30616"/>
    </ligand>
</feature>
<feature type="binding site" evidence="1">
    <location>
        <begin position="132"/>
        <end position="133"/>
    </location>
    <ligand>
        <name>ATP</name>
        <dbReference type="ChEBI" id="CHEBI:30616"/>
    </ligand>
</feature>
<feature type="binding site" evidence="1">
    <location>
        <position position="156"/>
    </location>
    <ligand>
        <name>AMP</name>
        <dbReference type="ChEBI" id="CHEBI:456215"/>
    </ligand>
</feature>
<feature type="binding site" evidence="1">
    <location>
        <position position="167"/>
    </location>
    <ligand>
        <name>AMP</name>
        <dbReference type="ChEBI" id="CHEBI:456215"/>
    </ligand>
</feature>
<feature type="binding site" evidence="1">
    <location>
        <position position="203"/>
    </location>
    <ligand>
        <name>ATP</name>
        <dbReference type="ChEBI" id="CHEBI:30616"/>
    </ligand>
</feature>
<evidence type="ECO:0000255" key="1">
    <source>
        <dbReference type="HAMAP-Rule" id="MF_00235"/>
    </source>
</evidence>
<reference key="1">
    <citation type="journal article" date="2003" name="Nat. Genet.">
        <title>Comparative analysis of the genome sequences of Bordetella pertussis, Bordetella parapertussis and Bordetella bronchiseptica.</title>
        <authorList>
            <person name="Parkhill J."/>
            <person name="Sebaihia M."/>
            <person name="Preston A."/>
            <person name="Murphy L.D."/>
            <person name="Thomson N.R."/>
            <person name="Harris D.E."/>
            <person name="Holden M.T.G."/>
            <person name="Churcher C.M."/>
            <person name="Bentley S.D."/>
            <person name="Mungall K.L."/>
            <person name="Cerdeno-Tarraga A.-M."/>
            <person name="Temple L."/>
            <person name="James K.D."/>
            <person name="Harris B."/>
            <person name="Quail M.A."/>
            <person name="Achtman M."/>
            <person name="Atkin R."/>
            <person name="Baker S."/>
            <person name="Basham D."/>
            <person name="Bason N."/>
            <person name="Cherevach I."/>
            <person name="Chillingworth T."/>
            <person name="Collins M."/>
            <person name="Cronin A."/>
            <person name="Davis P."/>
            <person name="Doggett J."/>
            <person name="Feltwell T."/>
            <person name="Goble A."/>
            <person name="Hamlin N."/>
            <person name="Hauser H."/>
            <person name="Holroyd S."/>
            <person name="Jagels K."/>
            <person name="Leather S."/>
            <person name="Moule S."/>
            <person name="Norberczak H."/>
            <person name="O'Neil S."/>
            <person name="Ormond D."/>
            <person name="Price C."/>
            <person name="Rabbinowitsch E."/>
            <person name="Rutter S."/>
            <person name="Sanders M."/>
            <person name="Saunders D."/>
            <person name="Seeger K."/>
            <person name="Sharp S."/>
            <person name="Simmonds M."/>
            <person name="Skelton J."/>
            <person name="Squares R."/>
            <person name="Squares S."/>
            <person name="Stevens K."/>
            <person name="Unwin L."/>
            <person name="Whitehead S."/>
            <person name="Barrell B.G."/>
            <person name="Maskell D.J."/>
        </authorList>
    </citation>
    <scope>NUCLEOTIDE SEQUENCE [LARGE SCALE GENOMIC DNA]</scope>
    <source>
        <strain>ATCC BAA-588 / NCTC 13252 / RB50</strain>
    </source>
</reference>
<sequence length="218" mass="23715">MRLILLGPPGAGKGTQAAFLTQHYGIPQISTGDMLRAAVKAGTPLGLEAKKVMDAGGLVSDDLIIGLVRDRLTQPDCANGYLFDGFPRTIPQADALKSAGIALDYVVEIEVPESDIIERMSGRRVHPASGRSYHVRFNPPKAEGVDDVTGEPLVQRDDDREETVRHRLNVYQNQTRPLVDYYSSWAQSDAAAAPKYRKISGVGSVDEIKSRLSQALQS</sequence>
<organism>
    <name type="scientific">Bordetella bronchiseptica (strain ATCC BAA-588 / NCTC 13252 / RB50)</name>
    <name type="common">Alcaligenes bronchisepticus</name>
    <dbReference type="NCBI Taxonomy" id="257310"/>
    <lineage>
        <taxon>Bacteria</taxon>
        <taxon>Pseudomonadati</taxon>
        <taxon>Pseudomonadota</taxon>
        <taxon>Betaproteobacteria</taxon>
        <taxon>Burkholderiales</taxon>
        <taxon>Alcaligenaceae</taxon>
        <taxon>Bordetella</taxon>
    </lineage>
</organism>
<name>KAD_BORBR</name>
<proteinExistence type="inferred from homology"/>